<evidence type="ECO:0000250" key="1"/>
<evidence type="ECO:0000255" key="2">
    <source>
        <dbReference type="HAMAP-Rule" id="MF_00062"/>
    </source>
</evidence>
<gene>
    <name evidence="2" type="primary">cysN</name>
    <name type="ordered locus">Z4059</name>
    <name type="ordered locus">ECs3605</name>
</gene>
<keyword id="KW-0067">ATP-binding</keyword>
<keyword id="KW-0342">GTP-binding</keyword>
<keyword id="KW-0547">Nucleotide-binding</keyword>
<keyword id="KW-0548">Nucleotidyltransferase</keyword>
<keyword id="KW-1185">Reference proteome</keyword>
<keyword id="KW-0808">Transferase</keyword>
<organism>
    <name type="scientific">Escherichia coli O157:H7</name>
    <dbReference type="NCBI Taxonomy" id="83334"/>
    <lineage>
        <taxon>Bacteria</taxon>
        <taxon>Pseudomonadati</taxon>
        <taxon>Pseudomonadota</taxon>
        <taxon>Gammaproteobacteria</taxon>
        <taxon>Enterobacterales</taxon>
        <taxon>Enterobacteriaceae</taxon>
        <taxon>Escherichia</taxon>
    </lineage>
</organism>
<dbReference type="EC" id="2.7.7.4" evidence="2"/>
<dbReference type="EMBL" id="AE005174">
    <property type="protein sequence ID" value="AAG57858.1"/>
    <property type="molecule type" value="Genomic_DNA"/>
</dbReference>
<dbReference type="EMBL" id="BA000007">
    <property type="protein sequence ID" value="BAB37028.1"/>
    <property type="molecule type" value="Genomic_DNA"/>
</dbReference>
<dbReference type="PIR" id="E91079">
    <property type="entry name" value="E91079"/>
</dbReference>
<dbReference type="PIR" id="F85924">
    <property type="entry name" value="F85924"/>
</dbReference>
<dbReference type="RefSeq" id="NP_311632.1">
    <property type="nucleotide sequence ID" value="NC_002695.1"/>
</dbReference>
<dbReference type="RefSeq" id="WP_001090366.1">
    <property type="nucleotide sequence ID" value="NZ_VOAI01000003.1"/>
</dbReference>
<dbReference type="SMR" id="Q8X7X7"/>
<dbReference type="STRING" id="155864.Z4059"/>
<dbReference type="GeneID" id="914673"/>
<dbReference type="KEGG" id="ece:Z4059"/>
<dbReference type="KEGG" id="ecs:ECs_3605"/>
<dbReference type="PATRIC" id="fig|386585.9.peg.3768"/>
<dbReference type="eggNOG" id="COG2895">
    <property type="taxonomic scope" value="Bacteria"/>
</dbReference>
<dbReference type="HOGENOM" id="CLU_007265_5_2_6"/>
<dbReference type="OMA" id="MDLIGWD"/>
<dbReference type="UniPathway" id="UPA00140">
    <property type="reaction ID" value="UER00204"/>
</dbReference>
<dbReference type="Proteomes" id="UP000000558">
    <property type="component" value="Chromosome"/>
</dbReference>
<dbReference type="Proteomes" id="UP000002519">
    <property type="component" value="Chromosome"/>
</dbReference>
<dbReference type="GO" id="GO:0005524">
    <property type="term" value="F:ATP binding"/>
    <property type="evidence" value="ECO:0007669"/>
    <property type="project" value="UniProtKB-KW"/>
</dbReference>
<dbReference type="GO" id="GO:0005525">
    <property type="term" value="F:GTP binding"/>
    <property type="evidence" value="ECO:0007669"/>
    <property type="project" value="UniProtKB-UniRule"/>
</dbReference>
<dbReference type="GO" id="GO:0003924">
    <property type="term" value="F:GTPase activity"/>
    <property type="evidence" value="ECO:0007669"/>
    <property type="project" value="InterPro"/>
</dbReference>
<dbReference type="GO" id="GO:0004781">
    <property type="term" value="F:sulfate adenylyltransferase (ATP) activity"/>
    <property type="evidence" value="ECO:0007669"/>
    <property type="project" value="UniProtKB-UniRule"/>
</dbReference>
<dbReference type="GO" id="GO:0070814">
    <property type="term" value="P:hydrogen sulfide biosynthetic process"/>
    <property type="evidence" value="ECO:0007669"/>
    <property type="project" value="UniProtKB-UniRule"/>
</dbReference>
<dbReference type="GO" id="GO:0000103">
    <property type="term" value="P:sulfate assimilation"/>
    <property type="evidence" value="ECO:0007669"/>
    <property type="project" value="UniProtKB-UniRule"/>
</dbReference>
<dbReference type="CDD" id="cd04166">
    <property type="entry name" value="CysN_ATPS"/>
    <property type="match status" value="1"/>
</dbReference>
<dbReference type="CDD" id="cd03695">
    <property type="entry name" value="CysN_NodQ_II"/>
    <property type="match status" value="1"/>
</dbReference>
<dbReference type="CDD" id="cd04095">
    <property type="entry name" value="CysN_NoDQ_III"/>
    <property type="match status" value="1"/>
</dbReference>
<dbReference type="FunFam" id="2.40.30.10:FF:000027">
    <property type="entry name" value="Sulfate adenylyltransferase subunit 1"/>
    <property type="match status" value="1"/>
</dbReference>
<dbReference type="FunFam" id="2.40.30.10:FF:000031">
    <property type="entry name" value="Sulfate adenylyltransferase subunit 1"/>
    <property type="match status" value="1"/>
</dbReference>
<dbReference type="FunFam" id="3.40.50.300:FF:000119">
    <property type="entry name" value="Sulfate adenylyltransferase subunit 1"/>
    <property type="match status" value="1"/>
</dbReference>
<dbReference type="Gene3D" id="3.40.50.300">
    <property type="entry name" value="P-loop containing nucleotide triphosphate hydrolases"/>
    <property type="match status" value="1"/>
</dbReference>
<dbReference type="Gene3D" id="2.40.30.10">
    <property type="entry name" value="Translation factors"/>
    <property type="match status" value="2"/>
</dbReference>
<dbReference type="HAMAP" id="MF_00062">
    <property type="entry name" value="Sulf_adenylyltr_sub1"/>
    <property type="match status" value="1"/>
</dbReference>
<dbReference type="InterPro" id="IPR041757">
    <property type="entry name" value="CysN_GTP-bd"/>
</dbReference>
<dbReference type="InterPro" id="IPR044138">
    <property type="entry name" value="CysN_II"/>
</dbReference>
<dbReference type="InterPro" id="IPR044139">
    <property type="entry name" value="CysN_NoDQ_III"/>
</dbReference>
<dbReference type="InterPro" id="IPR031157">
    <property type="entry name" value="G_TR_CS"/>
</dbReference>
<dbReference type="InterPro" id="IPR054696">
    <property type="entry name" value="GTP-eEF1A_C"/>
</dbReference>
<dbReference type="InterPro" id="IPR027417">
    <property type="entry name" value="P-loop_NTPase"/>
</dbReference>
<dbReference type="InterPro" id="IPR005225">
    <property type="entry name" value="Small_GTP-bd"/>
</dbReference>
<dbReference type="InterPro" id="IPR011779">
    <property type="entry name" value="SO4_adenylTrfase_lsu"/>
</dbReference>
<dbReference type="InterPro" id="IPR000795">
    <property type="entry name" value="T_Tr_GTP-bd_dom"/>
</dbReference>
<dbReference type="InterPro" id="IPR050100">
    <property type="entry name" value="TRAFAC_GTPase_members"/>
</dbReference>
<dbReference type="InterPro" id="IPR009000">
    <property type="entry name" value="Transl_B-barrel_sf"/>
</dbReference>
<dbReference type="InterPro" id="IPR009001">
    <property type="entry name" value="Transl_elong_EF1A/Init_IF2_C"/>
</dbReference>
<dbReference type="NCBIfam" id="TIGR02034">
    <property type="entry name" value="CysN"/>
    <property type="match status" value="1"/>
</dbReference>
<dbReference type="NCBIfam" id="NF003478">
    <property type="entry name" value="PRK05124.1"/>
    <property type="match status" value="1"/>
</dbReference>
<dbReference type="NCBIfam" id="TIGR00231">
    <property type="entry name" value="small_GTP"/>
    <property type="match status" value="1"/>
</dbReference>
<dbReference type="PANTHER" id="PTHR23115">
    <property type="entry name" value="TRANSLATION FACTOR"/>
    <property type="match status" value="1"/>
</dbReference>
<dbReference type="Pfam" id="PF22594">
    <property type="entry name" value="GTP-eEF1A_C"/>
    <property type="match status" value="1"/>
</dbReference>
<dbReference type="Pfam" id="PF00009">
    <property type="entry name" value="GTP_EFTU"/>
    <property type="match status" value="1"/>
</dbReference>
<dbReference type="PRINTS" id="PR00315">
    <property type="entry name" value="ELONGATNFCT"/>
</dbReference>
<dbReference type="SUPFAM" id="SSF50465">
    <property type="entry name" value="EF-Tu/eEF-1alpha/eIF2-gamma C-terminal domain"/>
    <property type="match status" value="1"/>
</dbReference>
<dbReference type="SUPFAM" id="SSF52540">
    <property type="entry name" value="P-loop containing nucleoside triphosphate hydrolases"/>
    <property type="match status" value="1"/>
</dbReference>
<dbReference type="SUPFAM" id="SSF50447">
    <property type="entry name" value="Translation proteins"/>
    <property type="match status" value="1"/>
</dbReference>
<dbReference type="PROSITE" id="PS00301">
    <property type="entry name" value="G_TR_1"/>
    <property type="match status" value="1"/>
</dbReference>
<dbReference type="PROSITE" id="PS51722">
    <property type="entry name" value="G_TR_2"/>
    <property type="match status" value="1"/>
</dbReference>
<sequence length="475" mass="52588">MNTALAQQIANEGGVEAWMIAQQHKSLLRFLTCGSVDDGKSTLIGRLLHDTRQIYEDQLSSLHNDSKRHGTQGEKLDLALLVDGLQAEREQGITIDVAYRYFSTEKRKFIIADTPGHEQYTRNMATGASTCELAILLIDARKGVLDQTRRHSFISTLLGIKHLVVAINKMDLVDYSEETFTRIREDYLTFAGQLPGNLDIRFVPLSALEGDNVASQSESMPWYSGPTLLEVLETVEIQRVVDAQPMRFPVQYVNRPNLDFRGYAGTLASGRVEVGQRVKVLPSGVESNVARIVTFDGDREEAFAGEAITLVLTDEIDISRGDLLLAADEALPAVQSASVDVVWMAEQPLSPGQSYDIKIAGKKTRSRVDGIRYQVDINNLTQREVENLPLNGIGLVDLTFDEPLVLDRYQQNPVTGGLIFIDRLSNVTVGAGMVHEPVSQATAAPSEFSAFELELNALVRRHFPHWGARDLLGEK</sequence>
<feature type="chain" id="PRO_0000091524" description="Sulfate adenylyltransferase subunit 1">
    <location>
        <begin position="1"/>
        <end position="475"/>
    </location>
</feature>
<feature type="domain" description="tr-type G">
    <location>
        <begin position="25"/>
        <end position="239"/>
    </location>
</feature>
<feature type="region of interest" description="G1" evidence="1">
    <location>
        <begin position="34"/>
        <end position="41"/>
    </location>
</feature>
<feature type="region of interest" description="G2" evidence="1">
    <location>
        <begin position="92"/>
        <end position="96"/>
    </location>
</feature>
<feature type="region of interest" description="G3" evidence="1">
    <location>
        <begin position="113"/>
        <end position="116"/>
    </location>
</feature>
<feature type="region of interest" description="G4" evidence="1">
    <location>
        <begin position="168"/>
        <end position="171"/>
    </location>
</feature>
<feature type="region of interest" description="G5" evidence="1">
    <location>
        <begin position="206"/>
        <end position="208"/>
    </location>
</feature>
<feature type="binding site" evidence="2">
    <location>
        <begin position="34"/>
        <end position="41"/>
    </location>
    <ligand>
        <name>GTP</name>
        <dbReference type="ChEBI" id="CHEBI:37565"/>
    </ligand>
</feature>
<feature type="binding site" evidence="2">
    <location>
        <begin position="113"/>
        <end position="117"/>
    </location>
    <ligand>
        <name>GTP</name>
        <dbReference type="ChEBI" id="CHEBI:37565"/>
    </ligand>
</feature>
<feature type="binding site" evidence="2">
    <location>
        <begin position="168"/>
        <end position="171"/>
    </location>
    <ligand>
        <name>GTP</name>
        <dbReference type="ChEBI" id="CHEBI:37565"/>
    </ligand>
</feature>
<accession>Q8X7X7</accession>
<protein>
    <recommendedName>
        <fullName evidence="2">Sulfate adenylyltransferase subunit 1</fullName>
        <ecNumber evidence="2">2.7.7.4</ecNumber>
    </recommendedName>
    <alternativeName>
        <fullName evidence="2">ATP-sulfurylase large subunit</fullName>
    </alternativeName>
    <alternativeName>
        <fullName evidence="2">Sulfate adenylate transferase</fullName>
        <shortName evidence="2">SAT</shortName>
    </alternativeName>
</protein>
<proteinExistence type="inferred from homology"/>
<reference key="1">
    <citation type="journal article" date="2001" name="Nature">
        <title>Genome sequence of enterohaemorrhagic Escherichia coli O157:H7.</title>
        <authorList>
            <person name="Perna N.T."/>
            <person name="Plunkett G. III"/>
            <person name="Burland V."/>
            <person name="Mau B."/>
            <person name="Glasner J.D."/>
            <person name="Rose D.J."/>
            <person name="Mayhew G.F."/>
            <person name="Evans P.S."/>
            <person name="Gregor J."/>
            <person name="Kirkpatrick H.A."/>
            <person name="Posfai G."/>
            <person name="Hackett J."/>
            <person name="Klink S."/>
            <person name="Boutin A."/>
            <person name="Shao Y."/>
            <person name="Miller L."/>
            <person name="Grotbeck E.J."/>
            <person name="Davis N.W."/>
            <person name="Lim A."/>
            <person name="Dimalanta E.T."/>
            <person name="Potamousis K."/>
            <person name="Apodaca J."/>
            <person name="Anantharaman T.S."/>
            <person name="Lin J."/>
            <person name="Yen G."/>
            <person name="Schwartz D.C."/>
            <person name="Welch R.A."/>
            <person name="Blattner F.R."/>
        </authorList>
    </citation>
    <scope>NUCLEOTIDE SEQUENCE [LARGE SCALE GENOMIC DNA]</scope>
    <source>
        <strain>O157:H7 / EDL933 / ATCC 700927 / EHEC</strain>
    </source>
</reference>
<reference key="2">
    <citation type="journal article" date="2001" name="DNA Res.">
        <title>Complete genome sequence of enterohemorrhagic Escherichia coli O157:H7 and genomic comparison with a laboratory strain K-12.</title>
        <authorList>
            <person name="Hayashi T."/>
            <person name="Makino K."/>
            <person name="Ohnishi M."/>
            <person name="Kurokawa K."/>
            <person name="Ishii K."/>
            <person name="Yokoyama K."/>
            <person name="Han C.-G."/>
            <person name="Ohtsubo E."/>
            <person name="Nakayama K."/>
            <person name="Murata T."/>
            <person name="Tanaka M."/>
            <person name="Tobe T."/>
            <person name="Iida T."/>
            <person name="Takami H."/>
            <person name="Honda T."/>
            <person name="Sasakawa C."/>
            <person name="Ogasawara N."/>
            <person name="Yasunaga T."/>
            <person name="Kuhara S."/>
            <person name="Shiba T."/>
            <person name="Hattori M."/>
            <person name="Shinagawa H."/>
        </authorList>
    </citation>
    <scope>NUCLEOTIDE SEQUENCE [LARGE SCALE GENOMIC DNA]</scope>
    <source>
        <strain>O157:H7 / Sakai / RIMD 0509952 / EHEC</strain>
    </source>
</reference>
<name>CYSN_ECO57</name>
<comment type="function">
    <text evidence="2">With CysD forms the ATP sulfurylase (ATPS) that catalyzes the adenylation of sulfate producing adenosine 5'-phosphosulfate (APS) and diphosphate, the first enzymatic step in sulfur assimilation pathway. APS synthesis involves the formation of a high-energy phosphoric-sulfuric acid anhydride bond driven by GTP hydrolysis by CysN coupled to ATP hydrolysis by CysD.</text>
</comment>
<comment type="catalytic activity">
    <reaction evidence="2">
        <text>sulfate + ATP + H(+) = adenosine 5'-phosphosulfate + diphosphate</text>
        <dbReference type="Rhea" id="RHEA:18133"/>
        <dbReference type="ChEBI" id="CHEBI:15378"/>
        <dbReference type="ChEBI" id="CHEBI:16189"/>
        <dbReference type="ChEBI" id="CHEBI:30616"/>
        <dbReference type="ChEBI" id="CHEBI:33019"/>
        <dbReference type="ChEBI" id="CHEBI:58243"/>
        <dbReference type="EC" id="2.7.7.4"/>
    </reaction>
</comment>
<comment type="pathway">
    <text evidence="2">Sulfur metabolism; hydrogen sulfide biosynthesis; sulfite from sulfate: step 1/3.</text>
</comment>
<comment type="subunit">
    <text evidence="2">Heterodimer composed of CysD, the smaller subunit, and CysN.</text>
</comment>
<comment type="similarity">
    <text evidence="2">Belongs to the TRAFAC class translation factor GTPase superfamily. Classic translation factor GTPase family. CysN/NodQ subfamily.</text>
</comment>